<name>LTV1_DANRE</name>
<keyword id="KW-0175">Coiled coil</keyword>
<keyword id="KW-1185">Reference proteome</keyword>
<keyword id="KW-0690">Ribosome biogenesis</keyword>
<dbReference type="EMBL" id="AY648712">
    <property type="protein sequence ID" value="AAT68030.1"/>
    <property type="molecule type" value="mRNA"/>
</dbReference>
<dbReference type="EMBL" id="BC085516">
    <property type="protein sequence ID" value="AAH85516.1"/>
    <property type="molecule type" value="mRNA"/>
</dbReference>
<dbReference type="SMR" id="Q5U3J8"/>
<dbReference type="FunCoup" id="Q5U3J8">
    <property type="interactions" value="1940"/>
</dbReference>
<dbReference type="STRING" id="7955.ENSDARP00000017491"/>
<dbReference type="PaxDb" id="7955-ENSDARP00000017491"/>
<dbReference type="AGR" id="ZFIN:ZDB-GENE-040712-1"/>
<dbReference type="ZFIN" id="ZDB-GENE-040712-1">
    <property type="gene designation" value="ltv1"/>
</dbReference>
<dbReference type="eggNOG" id="KOG2637">
    <property type="taxonomic scope" value="Eukaryota"/>
</dbReference>
<dbReference type="InParanoid" id="Q5U3J8"/>
<dbReference type="PhylomeDB" id="Q5U3J8"/>
<dbReference type="PRO" id="PR:Q5U3J8"/>
<dbReference type="Proteomes" id="UP000000437">
    <property type="component" value="Unplaced"/>
</dbReference>
<dbReference type="GO" id="GO:0005829">
    <property type="term" value="C:cytosol"/>
    <property type="evidence" value="ECO:0000318"/>
    <property type="project" value="GO_Central"/>
</dbReference>
<dbReference type="GO" id="GO:0005634">
    <property type="term" value="C:nucleus"/>
    <property type="evidence" value="ECO:0000318"/>
    <property type="project" value="GO_Central"/>
</dbReference>
<dbReference type="GO" id="GO:0030688">
    <property type="term" value="C:preribosome, small subunit precursor"/>
    <property type="evidence" value="ECO:0000318"/>
    <property type="project" value="GO_Central"/>
</dbReference>
<dbReference type="GO" id="GO:0060536">
    <property type="term" value="P:cartilage morphogenesis"/>
    <property type="evidence" value="ECO:0000315"/>
    <property type="project" value="ZFIN"/>
</dbReference>
<dbReference type="GO" id="GO:0060216">
    <property type="term" value="P:definitive hemopoiesis"/>
    <property type="evidence" value="ECO:0000315"/>
    <property type="project" value="UniProtKB"/>
</dbReference>
<dbReference type="GO" id="GO:0055123">
    <property type="term" value="P:digestive system development"/>
    <property type="evidence" value="ECO:0000315"/>
    <property type="project" value="UniProtKB"/>
</dbReference>
<dbReference type="GO" id="GO:0042274">
    <property type="term" value="P:ribosomal small subunit biogenesis"/>
    <property type="evidence" value="ECO:0000318"/>
    <property type="project" value="GO_Central"/>
</dbReference>
<dbReference type="GO" id="GO:0000056">
    <property type="term" value="P:ribosomal small subunit export from nucleus"/>
    <property type="evidence" value="ECO:0000318"/>
    <property type="project" value="GO_Central"/>
</dbReference>
<dbReference type="GO" id="GO:0042254">
    <property type="term" value="P:ribosome biogenesis"/>
    <property type="evidence" value="ECO:0000315"/>
    <property type="project" value="UniProtKB"/>
</dbReference>
<dbReference type="GO" id="GO:0006364">
    <property type="term" value="P:rRNA processing"/>
    <property type="evidence" value="ECO:0000315"/>
    <property type="project" value="ZFIN"/>
</dbReference>
<dbReference type="InterPro" id="IPR007307">
    <property type="entry name" value="Ltv1"/>
</dbReference>
<dbReference type="PANTHER" id="PTHR21531">
    <property type="entry name" value="LOW-TEMPERATURE VIABILITY PROTEIN LTV1-RELATED"/>
    <property type="match status" value="1"/>
</dbReference>
<dbReference type="PANTHER" id="PTHR21531:SF0">
    <property type="entry name" value="PROTEIN LTV1 HOMOLOG"/>
    <property type="match status" value="1"/>
</dbReference>
<dbReference type="Pfam" id="PF04180">
    <property type="entry name" value="LTV"/>
    <property type="match status" value="2"/>
</dbReference>
<proteinExistence type="evidence at transcript level"/>
<organism>
    <name type="scientific">Danio rerio</name>
    <name type="common">Zebrafish</name>
    <name type="synonym">Brachydanio rerio</name>
    <dbReference type="NCBI Taxonomy" id="7955"/>
    <lineage>
        <taxon>Eukaryota</taxon>
        <taxon>Metazoa</taxon>
        <taxon>Chordata</taxon>
        <taxon>Craniata</taxon>
        <taxon>Vertebrata</taxon>
        <taxon>Euteleostomi</taxon>
        <taxon>Actinopterygii</taxon>
        <taxon>Neopterygii</taxon>
        <taxon>Teleostei</taxon>
        <taxon>Ostariophysi</taxon>
        <taxon>Cypriniformes</taxon>
        <taxon>Danionidae</taxon>
        <taxon>Danioninae</taxon>
        <taxon>Danio</taxon>
    </lineage>
</organism>
<accession>Q5U3J8</accession>
<accession>Q6DRP7</accession>
<sequence length="469" mass="54209">MPHRKKKSFINKKNAVSFHLVHRSQKDPLAADETAPQHVLLPTVRVELEKRKEEQRNFGVFFDDDYDYLQHLRESTQTAELISAPRVRRDTRLKPADDEEHMKEEDSSVSEASIKLPSSVFASEFEEEVGLLNKAAPISGPRLDMDPDIVAALDEDFDFDDPENMLEDDFIIKASDVMGGGGGEDDDEWEDTDDDDGEEQDFDSEAGLSDDEEGGRREFMFADCETKTRFTEYSLTSSVMRRNEQLTLLDDRFDEFYKQFDDDEIGALDNAELEGYIEPDSARLEEVIKDYFIQKEKDCQKPDQLGPAELPSVREEDEEDEDADEELETERMVIEPPAERWDCETIISTYSNLYNRPKLIQDPPKPKQIRVSSKSGIPLDVLPKRGLTVKQVERMERINDSDLPRVSTQPRSRDENTEERKARKQAIKSERKERRTKKKANKLAFKQEKQMQEKQMVHLRANVQGMKLS</sequence>
<evidence type="ECO:0000255" key="1"/>
<evidence type="ECO:0000256" key="2">
    <source>
        <dbReference type="SAM" id="MobiDB-lite"/>
    </source>
</evidence>
<evidence type="ECO:0000269" key="3">
    <source>
    </source>
</evidence>
<evidence type="ECO:0000305" key="4"/>
<gene>
    <name type="primary">ltv1</name>
    <name type="ORF">zgc:103432</name>
</gene>
<reference key="1">
    <citation type="journal article" date="2004" name="Proc. Natl. Acad. Sci. U.S.A.">
        <title>Identification of 315 genes essential for early zebrafish development.</title>
        <authorList>
            <person name="Amsterdam A."/>
            <person name="Nissen R.M."/>
            <person name="Sun Z."/>
            <person name="Swindell E.C."/>
            <person name="Farrington S."/>
            <person name="Hopkins N."/>
        </authorList>
    </citation>
    <scope>NUCLEOTIDE SEQUENCE [LARGE SCALE MRNA]</scope>
</reference>
<reference key="2">
    <citation type="submission" date="2004-11" db="EMBL/GenBank/DDBJ databases">
        <authorList>
            <consortium name="NIH - Zebrafish Gene Collection (ZGC) project"/>
        </authorList>
    </citation>
    <scope>NUCLEOTIDE SEQUENCE [LARGE SCALE MRNA]</scope>
    <source>
        <tissue>Heart</tissue>
    </source>
</reference>
<reference key="3">
    <citation type="journal article" date="2021" name="Front. Cell Dev. Biol.">
        <title>The Ribosome Biogenesis Factor Ltv1 Is Essential for Digestive Organ Development and Definitive Hematopoiesis in Zebrafish.</title>
        <authorList>
            <person name="Zhang C."/>
            <person name="Huang R."/>
            <person name="Ma X."/>
            <person name="Chen J."/>
            <person name="Han X."/>
            <person name="Li L."/>
            <person name="Luo L."/>
            <person name="Ruan H."/>
            <person name="Huang H."/>
        </authorList>
    </citation>
    <scope>FUNCTION</scope>
    <scope>DISRUPTION PHENOTYPE</scope>
</reference>
<feature type="chain" id="PRO_0000302817" description="Protein LTV1 homolog">
    <location>
        <begin position="1"/>
        <end position="469"/>
    </location>
</feature>
<feature type="region of interest" description="Disordered" evidence="2">
    <location>
        <begin position="88"/>
        <end position="112"/>
    </location>
</feature>
<feature type="region of interest" description="Disordered" evidence="2">
    <location>
        <begin position="175"/>
        <end position="219"/>
    </location>
</feature>
<feature type="region of interest" description="Disordered" evidence="2">
    <location>
        <begin position="298"/>
        <end position="329"/>
    </location>
</feature>
<feature type="region of interest" description="Disordered" evidence="2">
    <location>
        <begin position="394"/>
        <end position="454"/>
    </location>
</feature>
<feature type="coiled-coil region" evidence="1">
    <location>
        <begin position="444"/>
        <end position="467"/>
    </location>
</feature>
<feature type="compositionally biased region" description="Basic and acidic residues" evidence="2">
    <location>
        <begin position="88"/>
        <end position="106"/>
    </location>
</feature>
<feature type="compositionally biased region" description="Acidic residues" evidence="2">
    <location>
        <begin position="183"/>
        <end position="213"/>
    </location>
</feature>
<feature type="compositionally biased region" description="Acidic residues" evidence="2">
    <location>
        <begin position="315"/>
        <end position="328"/>
    </location>
</feature>
<feature type="compositionally biased region" description="Basic and acidic residues" evidence="2">
    <location>
        <begin position="394"/>
        <end position="403"/>
    </location>
</feature>
<feature type="compositionally biased region" description="Basic and acidic residues" evidence="2">
    <location>
        <begin position="411"/>
        <end position="433"/>
    </location>
</feature>
<feature type="compositionally biased region" description="Basic and acidic residues" evidence="2">
    <location>
        <begin position="445"/>
        <end position="454"/>
    </location>
</feature>
<feature type="sequence conflict" description="In Ref. 1; AAT68030." evidence="4" ref="1">
    <original>T</original>
    <variation>A</variation>
    <location>
        <position position="91"/>
    </location>
</feature>
<feature type="sequence conflict" description="In Ref. 1; AAT68030." evidence="4" ref="1">
    <original>K</original>
    <variation>E</variation>
    <location>
        <position position="103"/>
    </location>
</feature>
<feature type="sequence conflict" description="In Ref. 1; AAT68030." evidence="4" ref="1">
    <original>S</original>
    <variation>G</variation>
    <location>
        <position position="107"/>
    </location>
</feature>
<feature type="sequence conflict" description="In Ref. 1; AAT68030." evidence="4" ref="1">
    <original>S</original>
    <variation>P</variation>
    <location>
        <position position="110"/>
    </location>
</feature>
<feature type="sequence conflict" description="In Ref. 1; AAT68030." evidence="4" ref="1">
    <original>S</original>
    <variation>N</variation>
    <location>
        <position position="175"/>
    </location>
</feature>
<feature type="sequence conflict" description="In Ref. 1; AAT68030." evidence="4" ref="1">
    <original>E</original>
    <variation>GGEDD</variation>
    <location>
        <position position="184"/>
    </location>
</feature>
<feature type="sequence conflict" description="In Ref. 1; AAT68030." evidence="4" ref="1">
    <original>D</original>
    <variation>DE</variation>
    <location>
        <position position="324"/>
    </location>
</feature>
<feature type="sequence conflict" description="In Ref. 1; AAT68030." evidence="4" ref="1">
    <original>E</original>
    <variation>K</variation>
    <location>
        <position position="335"/>
    </location>
</feature>
<feature type="sequence conflict" description="In Ref. 1; AAT68030." evidence="4" ref="1">
    <original>K</original>
    <variation>E</variation>
    <location>
        <position position="437"/>
    </location>
</feature>
<comment type="function">
    <text evidence="3">Essential for ribosome biogenesis (PubMed:34692673). Involved in organogenesis of digestive system and definitive hematopoiesis (PubMed:34692673).</text>
</comment>
<comment type="disruption phenotype">
    <text evidence="3">Knockout disrupts ribosome biogenesis and embryos display aberrant cartilage structure, defects in digestive organs, characterized by smaller size of liver, intestine and exocrine pancreas, and impaired definitive hematopoiesis.</text>
</comment>
<comment type="similarity">
    <text evidence="4">Belongs to the LTV1 family.</text>
</comment>
<protein>
    <recommendedName>
        <fullName>Protein LTV1 homolog</fullName>
    </recommendedName>
</protein>